<accession>Q1D2Q7</accession>
<gene>
    <name evidence="1" type="primary">murA</name>
    <name type="ordered locus">MXAN_4909</name>
</gene>
<proteinExistence type="inferred from homology"/>
<dbReference type="EC" id="2.5.1.7" evidence="1"/>
<dbReference type="EMBL" id="CP000113">
    <property type="protein sequence ID" value="ABF90980.1"/>
    <property type="molecule type" value="Genomic_DNA"/>
</dbReference>
<dbReference type="RefSeq" id="WP_011554890.1">
    <property type="nucleotide sequence ID" value="NC_008095.1"/>
</dbReference>
<dbReference type="SMR" id="Q1D2Q7"/>
<dbReference type="STRING" id="246197.MXAN_4909"/>
<dbReference type="EnsemblBacteria" id="ABF90980">
    <property type="protein sequence ID" value="ABF90980"/>
    <property type="gene ID" value="MXAN_4909"/>
</dbReference>
<dbReference type="GeneID" id="41362197"/>
<dbReference type="KEGG" id="mxa:MXAN_4909"/>
<dbReference type="eggNOG" id="COG0766">
    <property type="taxonomic scope" value="Bacteria"/>
</dbReference>
<dbReference type="HOGENOM" id="CLU_027387_0_0_7"/>
<dbReference type="OrthoDB" id="9803760at2"/>
<dbReference type="UniPathway" id="UPA00219"/>
<dbReference type="Proteomes" id="UP000002402">
    <property type="component" value="Chromosome"/>
</dbReference>
<dbReference type="GO" id="GO:0005737">
    <property type="term" value="C:cytoplasm"/>
    <property type="evidence" value="ECO:0007669"/>
    <property type="project" value="UniProtKB-SubCell"/>
</dbReference>
<dbReference type="GO" id="GO:0008760">
    <property type="term" value="F:UDP-N-acetylglucosamine 1-carboxyvinyltransferase activity"/>
    <property type="evidence" value="ECO:0007669"/>
    <property type="project" value="UniProtKB-UniRule"/>
</dbReference>
<dbReference type="GO" id="GO:0051301">
    <property type="term" value="P:cell division"/>
    <property type="evidence" value="ECO:0007669"/>
    <property type="project" value="UniProtKB-KW"/>
</dbReference>
<dbReference type="GO" id="GO:0071555">
    <property type="term" value="P:cell wall organization"/>
    <property type="evidence" value="ECO:0007669"/>
    <property type="project" value="UniProtKB-KW"/>
</dbReference>
<dbReference type="GO" id="GO:0009252">
    <property type="term" value="P:peptidoglycan biosynthetic process"/>
    <property type="evidence" value="ECO:0007669"/>
    <property type="project" value="UniProtKB-UniRule"/>
</dbReference>
<dbReference type="GO" id="GO:0008360">
    <property type="term" value="P:regulation of cell shape"/>
    <property type="evidence" value="ECO:0007669"/>
    <property type="project" value="UniProtKB-KW"/>
</dbReference>
<dbReference type="GO" id="GO:0019277">
    <property type="term" value="P:UDP-N-acetylgalactosamine biosynthetic process"/>
    <property type="evidence" value="ECO:0007669"/>
    <property type="project" value="InterPro"/>
</dbReference>
<dbReference type="CDD" id="cd01555">
    <property type="entry name" value="UdpNAET"/>
    <property type="match status" value="1"/>
</dbReference>
<dbReference type="FunFam" id="3.65.10.10:FF:000001">
    <property type="entry name" value="UDP-N-acetylglucosamine 1-carboxyvinyltransferase"/>
    <property type="match status" value="1"/>
</dbReference>
<dbReference type="Gene3D" id="3.65.10.10">
    <property type="entry name" value="Enolpyruvate transferase domain"/>
    <property type="match status" value="2"/>
</dbReference>
<dbReference type="HAMAP" id="MF_00111">
    <property type="entry name" value="MurA"/>
    <property type="match status" value="1"/>
</dbReference>
<dbReference type="InterPro" id="IPR001986">
    <property type="entry name" value="Enolpyruvate_Tfrase_dom"/>
</dbReference>
<dbReference type="InterPro" id="IPR036968">
    <property type="entry name" value="Enolpyruvate_Tfrase_sf"/>
</dbReference>
<dbReference type="InterPro" id="IPR050068">
    <property type="entry name" value="MurA_subfamily"/>
</dbReference>
<dbReference type="InterPro" id="IPR013792">
    <property type="entry name" value="RNA3'P_cycl/enolpyr_Trfase_a/b"/>
</dbReference>
<dbReference type="InterPro" id="IPR005750">
    <property type="entry name" value="UDP_GlcNAc_COvinyl_MurA"/>
</dbReference>
<dbReference type="NCBIfam" id="TIGR01072">
    <property type="entry name" value="murA"/>
    <property type="match status" value="1"/>
</dbReference>
<dbReference type="NCBIfam" id="NF006873">
    <property type="entry name" value="PRK09369.1"/>
    <property type="match status" value="1"/>
</dbReference>
<dbReference type="PANTHER" id="PTHR43783">
    <property type="entry name" value="UDP-N-ACETYLGLUCOSAMINE 1-CARBOXYVINYLTRANSFERASE"/>
    <property type="match status" value="1"/>
</dbReference>
<dbReference type="PANTHER" id="PTHR43783:SF1">
    <property type="entry name" value="UDP-N-ACETYLGLUCOSAMINE 1-CARBOXYVINYLTRANSFERASE"/>
    <property type="match status" value="1"/>
</dbReference>
<dbReference type="Pfam" id="PF00275">
    <property type="entry name" value="EPSP_synthase"/>
    <property type="match status" value="1"/>
</dbReference>
<dbReference type="SUPFAM" id="SSF55205">
    <property type="entry name" value="EPT/RTPC-like"/>
    <property type="match status" value="1"/>
</dbReference>
<feature type="chain" id="PRO_1000023057" description="UDP-N-acetylglucosamine 1-carboxyvinyltransferase">
    <location>
        <begin position="1"/>
        <end position="420"/>
    </location>
</feature>
<feature type="active site" description="Proton donor" evidence="1">
    <location>
        <position position="119"/>
    </location>
</feature>
<feature type="binding site" evidence="1">
    <location>
        <begin position="22"/>
        <end position="23"/>
    </location>
    <ligand>
        <name>phosphoenolpyruvate</name>
        <dbReference type="ChEBI" id="CHEBI:58702"/>
    </ligand>
</feature>
<feature type="binding site" evidence="1">
    <location>
        <position position="95"/>
    </location>
    <ligand>
        <name>UDP-N-acetyl-alpha-D-glucosamine</name>
        <dbReference type="ChEBI" id="CHEBI:57705"/>
    </ligand>
</feature>
<feature type="binding site" evidence="1">
    <location>
        <begin position="124"/>
        <end position="128"/>
    </location>
    <ligand>
        <name>UDP-N-acetyl-alpha-D-glucosamine</name>
        <dbReference type="ChEBI" id="CHEBI:57705"/>
    </ligand>
</feature>
<feature type="binding site" evidence="1">
    <location>
        <position position="307"/>
    </location>
    <ligand>
        <name>UDP-N-acetyl-alpha-D-glucosamine</name>
        <dbReference type="ChEBI" id="CHEBI:57705"/>
    </ligand>
</feature>
<feature type="binding site" evidence="1">
    <location>
        <position position="329"/>
    </location>
    <ligand>
        <name>UDP-N-acetyl-alpha-D-glucosamine</name>
        <dbReference type="ChEBI" id="CHEBI:57705"/>
    </ligand>
</feature>
<feature type="modified residue" description="2-(S-cysteinyl)pyruvic acid O-phosphothioketal" evidence="1">
    <location>
        <position position="119"/>
    </location>
</feature>
<evidence type="ECO:0000255" key="1">
    <source>
        <dbReference type="HAMAP-Rule" id="MF_00111"/>
    </source>
</evidence>
<keyword id="KW-0131">Cell cycle</keyword>
<keyword id="KW-0132">Cell division</keyword>
<keyword id="KW-0133">Cell shape</keyword>
<keyword id="KW-0961">Cell wall biogenesis/degradation</keyword>
<keyword id="KW-0963">Cytoplasm</keyword>
<keyword id="KW-0573">Peptidoglycan synthesis</keyword>
<keyword id="KW-0670">Pyruvate</keyword>
<keyword id="KW-1185">Reference proteome</keyword>
<keyword id="KW-0808">Transferase</keyword>
<sequence>MDKIVIKGGQALHGEVQASGAKNAALPILASALLADGTSTYRNVPALADVATMLKVLRTMGCDAERDSETTDVCRVGVNGHITPEAPYDLVKTMRASVLVLGPLVARFGRARVSMPGGCAIGARPIDQHLKGLKALGADIHLTEGYVEATAKQLKGGTVNFDVITVTGTENVMMAAVLAKGRTLMENCAREPEVEELAKVLNKMGARIEGAGTSSITIEGVDGLKPVEHAILPDRIEAGTLLVAAAISGGDVLVKRVVPEHMDALVEKLREAGCTITTEGSGLRCKAPQRLDAVNITTTEHPGFPTDMQAQLMALMSVSQGTSVISENIFENRFMHVPELHRLGADITIQGPTAVVKGVKGLSGAPVMATDLRASASLILAGLRAEGRTDVSRVYHLDRGYERLERKLSALGADIRREKA</sequence>
<organism>
    <name type="scientific">Myxococcus xanthus (strain DK1622)</name>
    <dbReference type="NCBI Taxonomy" id="246197"/>
    <lineage>
        <taxon>Bacteria</taxon>
        <taxon>Pseudomonadati</taxon>
        <taxon>Myxococcota</taxon>
        <taxon>Myxococcia</taxon>
        <taxon>Myxococcales</taxon>
        <taxon>Cystobacterineae</taxon>
        <taxon>Myxococcaceae</taxon>
        <taxon>Myxococcus</taxon>
    </lineage>
</organism>
<comment type="function">
    <text evidence="1">Cell wall formation. Adds enolpyruvyl to UDP-N-acetylglucosamine.</text>
</comment>
<comment type="catalytic activity">
    <reaction evidence="1">
        <text>phosphoenolpyruvate + UDP-N-acetyl-alpha-D-glucosamine = UDP-N-acetyl-3-O-(1-carboxyvinyl)-alpha-D-glucosamine + phosphate</text>
        <dbReference type="Rhea" id="RHEA:18681"/>
        <dbReference type="ChEBI" id="CHEBI:43474"/>
        <dbReference type="ChEBI" id="CHEBI:57705"/>
        <dbReference type="ChEBI" id="CHEBI:58702"/>
        <dbReference type="ChEBI" id="CHEBI:68483"/>
        <dbReference type="EC" id="2.5.1.7"/>
    </reaction>
</comment>
<comment type="pathway">
    <text evidence="1">Cell wall biogenesis; peptidoglycan biosynthesis.</text>
</comment>
<comment type="subcellular location">
    <subcellularLocation>
        <location evidence="1">Cytoplasm</location>
    </subcellularLocation>
</comment>
<comment type="similarity">
    <text evidence="1">Belongs to the EPSP synthase family. MurA subfamily.</text>
</comment>
<protein>
    <recommendedName>
        <fullName evidence="1">UDP-N-acetylglucosamine 1-carboxyvinyltransferase</fullName>
        <ecNumber evidence="1">2.5.1.7</ecNumber>
    </recommendedName>
    <alternativeName>
        <fullName evidence="1">Enoylpyruvate transferase</fullName>
    </alternativeName>
    <alternativeName>
        <fullName evidence="1">UDP-N-acetylglucosamine enolpyruvyl transferase</fullName>
        <shortName evidence="1">EPT</shortName>
    </alternativeName>
</protein>
<name>MURA_MYXXD</name>
<reference key="1">
    <citation type="journal article" date="2006" name="Proc. Natl. Acad. Sci. U.S.A.">
        <title>Evolution of sensory complexity recorded in a myxobacterial genome.</title>
        <authorList>
            <person name="Goldman B.S."/>
            <person name="Nierman W.C."/>
            <person name="Kaiser D."/>
            <person name="Slater S.C."/>
            <person name="Durkin A.S."/>
            <person name="Eisen J.A."/>
            <person name="Ronning C.M."/>
            <person name="Barbazuk W.B."/>
            <person name="Blanchard M."/>
            <person name="Field C."/>
            <person name="Halling C."/>
            <person name="Hinkle G."/>
            <person name="Iartchuk O."/>
            <person name="Kim H.S."/>
            <person name="Mackenzie C."/>
            <person name="Madupu R."/>
            <person name="Miller N."/>
            <person name="Shvartsbeyn A."/>
            <person name="Sullivan S.A."/>
            <person name="Vaudin M."/>
            <person name="Wiegand R."/>
            <person name="Kaplan H.B."/>
        </authorList>
    </citation>
    <scope>NUCLEOTIDE SEQUENCE [LARGE SCALE GENOMIC DNA]</scope>
    <source>
        <strain>DK1622</strain>
    </source>
</reference>